<feature type="chain" id="PRO_0000386056" description="GTPase Obg">
    <location>
        <begin position="1"/>
        <end position="479"/>
    </location>
</feature>
<feature type="domain" description="Obg" evidence="3">
    <location>
        <begin position="2"/>
        <end position="159"/>
    </location>
</feature>
<feature type="domain" description="OBG-type G" evidence="1">
    <location>
        <begin position="160"/>
        <end position="340"/>
    </location>
</feature>
<feature type="domain" description="OCT" evidence="2">
    <location>
        <begin position="358"/>
        <end position="436"/>
    </location>
</feature>
<feature type="region of interest" description="Disordered" evidence="4">
    <location>
        <begin position="438"/>
        <end position="479"/>
    </location>
</feature>
<feature type="compositionally biased region" description="Basic and acidic residues" evidence="4">
    <location>
        <begin position="451"/>
        <end position="467"/>
    </location>
</feature>
<feature type="binding site" evidence="1">
    <location>
        <begin position="166"/>
        <end position="173"/>
    </location>
    <ligand>
        <name>GTP</name>
        <dbReference type="ChEBI" id="CHEBI:37565"/>
    </ligand>
</feature>
<feature type="binding site" evidence="1">
    <location>
        <position position="173"/>
    </location>
    <ligand>
        <name>Mg(2+)</name>
        <dbReference type="ChEBI" id="CHEBI:18420"/>
    </ligand>
</feature>
<feature type="binding site" evidence="1">
    <location>
        <begin position="191"/>
        <end position="195"/>
    </location>
    <ligand>
        <name>GTP</name>
        <dbReference type="ChEBI" id="CHEBI:37565"/>
    </ligand>
</feature>
<feature type="binding site" evidence="1">
    <location>
        <position position="193"/>
    </location>
    <ligand>
        <name>Mg(2+)</name>
        <dbReference type="ChEBI" id="CHEBI:18420"/>
    </ligand>
</feature>
<feature type="binding site" evidence="1">
    <location>
        <begin position="212"/>
        <end position="215"/>
    </location>
    <ligand>
        <name>GTP</name>
        <dbReference type="ChEBI" id="CHEBI:37565"/>
    </ligand>
</feature>
<feature type="binding site" evidence="1">
    <location>
        <begin position="292"/>
        <end position="295"/>
    </location>
    <ligand>
        <name>GTP</name>
        <dbReference type="ChEBI" id="CHEBI:37565"/>
    </ligand>
</feature>
<feature type="binding site" evidence="1">
    <location>
        <begin position="321"/>
        <end position="323"/>
    </location>
    <ligand>
        <name>GTP</name>
        <dbReference type="ChEBI" id="CHEBI:37565"/>
    </ligand>
</feature>
<sequence length="479" mass="50568">MPRFVDRVVIHTRAGSGGNGCASVHREKFKPLGGPDGGNGGRGGSVVFVVDPQVHTLLDFHFRPHVTAASGKQGMGSNRDGAAGADLEVKVPDGTVVLDDNGRLLADLVGAGTRFEAAAGGRGGLGNAALASRARKAPGFALLGEPGQARDLTLELKTVADVGLVGFPSAGKSSLVSVISAAKPKIADYPFTTLVPNLGVVAAGGHSFIVADVPGLIPGASQGRGLGLDFLRHIERCAVLVHVVDCATAEPGRDPISDIDALEAELAAYQPTLQGDAVLDDLAERPRAVVLNKIDVPEARELAEFVEDELAQRGWPVFLVSTVTRENLQPLIFGLWQMVSEYNAARPQAAPRRPVIRPVPVDDSGFDVQADGHGGFVVTGARPERWIGQTNFDNDEAVGYLADRLARLGVEEELLRLGAKPGCAVTIGEMTFDWEPQTPAGGHVAMSGRGTDVRLERSDRVGAAERKAARRQRRERDDD</sequence>
<organism>
    <name type="scientific">Mycobacterium marinum (strain ATCC BAA-535 / M)</name>
    <dbReference type="NCBI Taxonomy" id="216594"/>
    <lineage>
        <taxon>Bacteria</taxon>
        <taxon>Bacillati</taxon>
        <taxon>Actinomycetota</taxon>
        <taxon>Actinomycetes</taxon>
        <taxon>Mycobacteriales</taxon>
        <taxon>Mycobacteriaceae</taxon>
        <taxon>Mycobacterium</taxon>
        <taxon>Mycobacterium ulcerans group</taxon>
    </lineage>
</organism>
<comment type="function">
    <text evidence="1">An essential GTPase which binds GTP, GDP and possibly (p)ppGpp with moderate affinity, with high nucleotide exchange rates and a fairly low GTP hydrolysis rate. Plays a role in control of the cell cycle, stress response, ribosome biogenesis and in those bacteria that undergo differentiation, in morphogenesis control.</text>
</comment>
<comment type="cofactor">
    <cofactor evidence="1">
        <name>Mg(2+)</name>
        <dbReference type="ChEBI" id="CHEBI:18420"/>
    </cofactor>
</comment>
<comment type="subunit">
    <text evidence="1">Monomer.</text>
</comment>
<comment type="subcellular location">
    <subcellularLocation>
        <location evidence="1">Cytoplasm</location>
    </subcellularLocation>
</comment>
<comment type="similarity">
    <text evidence="1">Belongs to the TRAFAC class OBG-HflX-like GTPase superfamily. OBG GTPase family.</text>
</comment>
<evidence type="ECO:0000255" key="1">
    <source>
        <dbReference type="HAMAP-Rule" id="MF_01454"/>
    </source>
</evidence>
<evidence type="ECO:0000255" key="2">
    <source>
        <dbReference type="PROSITE-ProRule" id="PRU01229"/>
    </source>
</evidence>
<evidence type="ECO:0000255" key="3">
    <source>
        <dbReference type="PROSITE-ProRule" id="PRU01231"/>
    </source>
</evidence>
<evidence type="ECO:0000256" key="4">
    <source>
        <dbReference type="SAM" id="MobiDB-lite"/>
    </source>
</evidence>
<name>OBG_MYCMM</name>
<dbReference type="EC" id="3.6.5.-" evidence="1"/>
<dbReference type="EMBL" id="CP000854">
    <property type="protein sequence ID" value="ACC42181.1"/>
    <property type="molecule type" value="Genomic_DNA"/>
</dbReference>
<dbReference type="RefSeq" id="WP_012395374.1">
    <property type="nucleotide sequence ID" value="NC_010612.1"/>
</dbReference>
<dbReference type="SMR" id="B2HMG1"/>
<dbReference type="STRING" id="216594.MMAR_3765"/>
<dbReference type="KEGG" id="mmi:MMAR_3765"/>
<dbReference type="eggNOG" id="COG0536">
    <property type="taxonomic scope" value="Bacteria"/>
</dbReference>
<dbReference type="HOGENOM" id="CLU_011747_2_1_11"/>
<dbReference type="OrthoDB" id="9807318at2"/>
<dbReference type="Proteomes" id="UP000001190">
    <property type="component" value="Chromosome"/>
</dbReference>
<dbReference type="GO" id="GO:0005737">
    <property type="term" value="C:cytoplasm"/>
    <property type="evidence" value="ECO:0007669"/>
    <property type="project" value="UniProtKB-SubCell"/>
</dbReference>
<dbReference type="GO" id="GO:0005525">
    <property type="term" value="F:GTP binding"/>
    <property type="evidence" value="ECO:0007669"/>
    <property type="project" value="UniProtKB-UniRule"/>
</dbReference>
<dbReference type="GO" id="GO:0003924">
    <property type="term" value="F:GTPase activity"/>
    <property type="evidence" value="ECO:0007669"/>
    <property type="project" value="UniProtKB-UniRule"/>
</dbReference>
<dbReference type="GO" id="GO:0000287">
    <property type="term" value="F:magnesium ion binding"/>
    <property type="evidence" value="ECO:0007669"/>
    <property type="project" value="InterPro"/>
</dbReference>
<dbReference type="GO" id="GO:0042254">
    <property type="term" value="P:ribosome biogenesis"/>
    <property type="evidence" value="ECO:0007669"/>
    <property type="project" value="UniProtKB-UniRule"/>
</dbReference>
<dbReference type="CDD" id="cd01898">
    <property type="entry name" value="Obg"/>
    <property type="match status" value="1"/>
</dbReference>
<dbReference type="FunFam" id="2.70.210.12:FF:000001">
    <property type="entry name" value="GTPase Obg"/>
    <property type="match status" value="1"/>
</dbReference>
<dbReference type="Gene3D" id="3.30.300.350">
    <property type="entry name" value="GTP-binding protein OBG, C-terminal domain"/>
    <property type="match status" value="1"/>
</dbReference>
<dbReference type="Gene3D" id="2.70.210.12">
    <property type="entry name" value="GTP1/OBG domain"/>
    <property type="match status" value="1"/>
</dbReference>
<dbReference type="Gene3D" id="3.40.50.300">
    <property type="entry name" value="P-loop containing nucleotide triphosphate hydrolases"/>
    <property type="match status" value="1"/>
</dbReference>
<dbReference type="HAMAP" id="MF_01454">
    <property type="entry name" value="GTPase_Obg"/>
    <property type="match status" value="1"/>
</dbReference>
<dbReference type="InterPro" id="IPR031167">
    <property type="entry name" value="G_OBG"/>
</dbReference>
<dbReference type="InterPro" id="IPR006073">
    <property type="entry name" value="GTP-bd"/>
</dbReference>
<dbReference type="InterPro" id="IPR014100">
    <property type="entry name" value="GTP-bd_Obg/CgtA"/>
</dbReference>
<dbReference type="InterPro" id="IPR036346">
    <property type="entry name" value="GTP-bd_prot_GTP1/OBG_C_sf"/>
</dbReference>
<dbReference type="InterPro" id="IPR006074">
    <property type="entry name" value="GTP1-OBG_CS"/>
</dbReference>
<dbReference type="InterPro" id="IPR006169">
    <property type="entry name" value="GTP1_OBG_dom"/>
</dbReference>
<dbReference type="InterPro" id="IPR036726">
    <property type="entry name" value="GTP1_OBG_dom_sf"/>
</dbReference>
<dbReference type="InterPro" id="IPR045086">
    <property type="entry name" value="OBG_GTPase"/>
</dbReference>
<dbReference type="InterPro" id="IPR015349">
    <property type="entry name" value="OCT_dom"/>
</dbReference>
<dbReference type="InterPro" id="IPR027417">
    <property type="entry name" value="P-loop_NTPase"/>
</dbReference>
<dbReference type="NCBIfam" id="TIGR02729">
    <property type="entry name" value="Obg_CgtA"/>
    <property type="match status" value="1"/>
</dbReference>
<dbReference type="NCBIfam" id="TIGR03595">
    <property type="entry name" value="Obg_CgtA_exten"/>
    <property type="match status" value="1"/>
</dbReference>
<dbReference type="NCBIfam" id="NF008954">
    <property type="entry name" value="PRK12296.1"/>
    <property type="match status" value="1"/>
</dbReference>
<dbReference type="NCBIfam" id="NF008955">
    <property type="entry name" value="PRK12297.1"/>
    <property type="match status" value="1"/>
</dbReference>
<dbReference type="NCBIfam" id="NF008956">
    <property type="entry name" value="PRK12299.1"/>
    <property type="match status" value="1"/>
</dbReference>
<dbReference type="PANTHER" id="PTHR11702">
    <property type="entry name" value="DEVELOPMENTALLY REGULATED GTP-BINDING PROTEIN-RELATED"/>
    <property type="match status" value="1"/>
</dbReference>
<dbReference type="PANTHER" id="PTHR11702:SF31">
    <property type="entry name" value="MITOCHONDRIAL RIBOSOME-ASSOCIATED GTPASE 2"/>
    <property type="match status" value="1"/>
</dbReference>
<dbReference type="Pfam" id="PF09269">
    <property type="entry name" value="DUF1967"/>
    <property type="match status" value="1"/>
</dbReference>
<dbReference type="Pfam" id="PF01018">
    <property type="entry name" value="GTP1_OBG"/>
    <property type="match status" value="1"/>
</dbReference>
<dbReference type="Pfam" id="PF01926">
    <property type="entry name" value="MMR_HSR1"/>
    <property type="match status" value="1"/>
</dbReference>
<dbReference type="PRINTS" id="PR00326">
    <property type="entry name" value="GTP1OBG"/>
</dbReference>
<dbReference type="SUPFAM" id="SSF102741">
    <property type="entry name" value="Obg GTP-binding protein C-terminal domain"/>
    <property type="match status" value="1"/>
</dbReference>
<dbReference type="SUPFAM" id="SSF82051">
    <property type="entry name" value="Obg GTP-binding protein N-terminal domain"/>
    <property type="match status" value="1"/>
</dbReference>
<dbReference type="SUPFAM" id="SSF52540">
    <property type="entry name" value="P-loop containing nucleoside triphosphate hydrolases"/>
    <property type="match status" value="1"/>
</dbReference>
<dbReference type="PROSITE" id="PS51710">
    <property type="entry name" value="G_OBG"/>
    <property type="match status" value="1"/>
</dbReference>
<dbReference type="PROSITE" id="PS00905">
    <property type="entry name" value="GTP1_OBG"/>
    <property type="match status" value="1"/>
</dbReference>
<dbReference type="PROSITE" id="PS51883">
    <property type="entry name" value="OBG"/>
    <property type="match status" value="1"/>
</dbReference>
<dbReference type="PROSITE" id="PS51881">
    <property type="entry name" value="OCT"/>
    <property type="match status" value="1"/>
</dbReference>
<keyword id="KW-0963">Cytoplasm</keyword>
<keyword id="KW-0342">GTP-binding</keyword>
<keyword id="KW-0378">Hydrolase</keyword>
<keyword id="KW-0460">Magnesium</keyword>
<keyword id="KW-0479">Metal-binding</keyword>
<keyword id="KW-0547">Nucleotide-binding</keyword>
<keyword id="KW-1185">Reference proteome</keyword>
<accession>B2HMG1</accession>
<protein>
    <recommendedName>
        <fullName evidence="1">GTPase Obg</fullName>
        <ecNumber evidence="1">3.6.5.-</ecNumber>
    </recommendedName>
    <alternativeName>
        <fullName evidence="1">GTP-binding protein Obg</fullName>
    </alternativeName>
</protein>
<proteinExistence type="inferred from homology"/>
<gene>
    <name evidence="1" type="primary">obg</name>
    <name type="ordered locus">MMAR_3765</name>
</gene>
<reference key="1">
    <citation type="journal article" date="2008" name="Genome Res.">
        <title>Insights from the complete genome sequence of Mycobacterium marinum on the evolution of Mycobacterium tuberculosis.</title>
        <authorList>
            <person name="Stinear T.P."/>
            <person name="Seemann T."/>
            <person name="Harrison P.F."/>
            <person name="Jenkin G.A."/>
            <person name="Davies J.K."/>
            <person name="Johnson P.D."/>
            <person name="Abdellah Z."/>
            <person name="Arrowsmith C."/>
            <person name="Chillingworth T."/>
            <person name="Churcher C."/>
            <person name="Clarke K."/>
            <person name="Cronin A."/>
            <person name="Davis P."/>
            <person name="Goodhead I."/>
            <person name="Holroyd N."/>
            <person name="Jagels K."/>
            <person name="Lord A."/>
            <person name="Moule S."/>
            <person name="Mungall K."/>
            <person name="Norbertczak H."/>
            <person name="Quail M.A."/>
            <person name="Rabbinowitsch E."/>
            <person name="Walker D."/>
            <person name="White B."/>
            <person name="Whitehead S."/>
            <person name="Small P.L."/>
            <person name="Brosch R."/>
            <person name="Ramakrishnan L."/>
            <person name="Fischbach M.A."/>
            <person name="Parkhill J."/>
            <person name="Cole S.T."/>
        </authorList>
    </citation>
    <scope>NUCLEOTIDE SEQUENCE [LARGE SCALE GENOMIC DNA]</scope>
    <source>
        <strain>ATCC BAA-535 / M</strain>
    </source>
</reference>